<name>P4H10_ARATH</name>
<accession>F4JZ24</accession>
<accession>Q9FKX6</accession>
<reference key="1">
    <citation type="journal article" date="1998" name="DNA Res.">
        <title>Structural analysis of Arabidopsis thaliana chromosome 5. V. Sequence features of the regions of 1,381,565 bp covered by twenty one physically assigned P1 and TAC clones.</title>
        <authorList>
            <person name="Kaneko T."/>
            <person name="Kotani H."/>
            <person name="Nakamura Y."/>
            <person name="Sato S."/>
            <person name="Asamizu E."/>
            <person name="Miyajima N."/>
            <person name="Tabata S."/>
        </authorList>
    </citation>
    <scope>NUCLEOTIDE SEQUENCE [LARGE SCALE GENOMIC DNA]</scope>
    <source>
        <strain>cv. Columbia</strain>
    </source>
</reference>
<reference key="2">
    <citation type="journal article" date="2017" name="Plant J.">
        <title>Araport11: a complete reannotation of the Arabidopsis thaliana reference genome.</title>
        <authorList>
            <person name="Cheng C.Y."/>
            <person name="Krishnakumar V."/>
            <person name="Chan A.P."/>
            <person name="Thibaud-Nissen F."/>
            <person name="Schobel S."/>
            <person name="Town C.D."/>
        </authorList>
    </citation>
    <scope>GENOME REANNOTATION</scope>
    <source>
        <strain>cv. Columbia</strain>
    </source>
</reference>
<reference key="3">
    <citation type="journal article" date="2007" name="Physiol. Plantarum">
        <title>Arabidopsis prolyl 4-hydroxylases are differentially expressed in response to hypoxia, anoxia and mechanical wounding.</title>
        <authorList>
            <person name="Vlad F."/>
            <person name="Spano T."/>
            <person name="Vlad D."/>
            <person name="Bou Daher F."/>
            <person name="Ouelhadj A."/>
            <person name="Kalaitzis P."/>
        </authorList>
    </citation>
    <scope>GENE FAMILY</scope>
    <scope>NOMENCLATURE</scope>
</reference>
<evidence type="ECO:0000250" key="1">
    <source>
        <dbReference type="UniProtKB" id="Q24JN5"/>
    </source>
</evidence>
<evidence type="ECO:0000250" key="2">
    <source>
        <dbReference type="UniProtKB" id="Q86KR9"/>
    </source>
</evidence>
<evidence type="ECO:0000250" key="3">
    <source>
        <dbReference type="UniProtKB" id="Q9ZW86"/>
    </source>
</evidence>
<evidence type="ECO:0000255" key="4"/>
<evidence type="ECO:0000255" key="5">
    <source>
        <dbReference type="PROSITE-ProRule" id="PRU00498"/>
    </source>
</evidence>
<evidence type="ECO:0000255" key="6">
    <source>
        <dbReference type="PROSITE-ProRule" id="PRU00805"/>
    </source>
</evidence>
<evidence type="ECO:0000303" key="7">
    <source ref="3"/>
</evidence>
<evidence type="ECO:0000305" key="8"/>
<keyword id="KW-0025">Alternative splicing</keyword>
<keyword id="KW-0223">Dioxygenase</keyword>
<keyword id="KW-0256">Endoplasmic reticulum</keyword>
<keyword id="KW-0325">Glycoprotein</keyword>
<keyword id="KW-0408">Iron</keyword>
<keyword id="KW-0472">Membrane</keyword>
<keyword id="KW-0479">Metal-binding</keyword>
<keyword id="KW-0560">Oxidoreductase</keyword>
<keyword id="KW-1185">Reference proteome</keyword>
<keyword id="KW-0735">Signal-anchor</keyword>
<keyword id="KW-0812">Transmembrane</keyword>
<keyword id="KW-1133">Transmembrane helix</keyword>
<protein>
    <recommendedName>
        <fullName evidence="8">Probable prolyl 4-hydroxylase 10</fullName>
        <shortName evidence="7">AtP4H10</shortName>
        <ecNumber evidence="8">1.14.11.2</ecNumber>
    </recommendedName>
</protein>
<organism>
    <name type="scientific">Arabidopsis thaliana</name>
    <name type="common">Mouse-ear cress</name>
    <dbReference type="NCBI Taxonomy" id="3702"/>
    <lineage>
        <taxon>Eukaryota</taxon>
        <taxon>Viridiplantae</taxon>
        <taxon>Streptophyta</taxon>
        <taxon>Embryophyta</taxon>
        <taxon>Tracheophyta</taxon>
        <taxon>Spermatophyta</taxon>
        <taxon>Magnoliopsida</taxon>
        <taxon>eudicotyledons</taxon>
        <taxon>Gunneridae</taxon>
        <taxon>Pentapetalae</taxon>
        <taxon>rosids</taxon>
        <taxon>malvids</taxon>
        <taxon>Brassicales</taxon>
        <taxon>Brassicaceae</taxon>
        <taxon>Camelineae</taxon>
        <taxon>Arabidopsis</taxon>
    </lineage>
</organism>
<dbReference type="EC" id="1.14.11.2" evidence="8"/>
<dbReference type="EMBL" id="AB011474">
    <property type="protein sequence ID" value="BAB10411.1"/>
    <property type="status" value="ALT_SEQ"/>
    <property type="molecule type" value="Genomic_DNA"/>
</dbReference>
<dbReference type="EMBL" id="CP002688">
    <property type="protein sequence ID" value="AED98153.1"/>
    <property type="molecule type" value="Genomic_DNA"/>
</dbReference>
<dbReference type="RefSeq" id="NP_201407.4">
    <molecule id="F4JZ24-1"/>
    <property type="nucleotide sequence ID" value="NM_126004.6"/>
</dbReference>
<dbReference type="SMR" id="F4JZ24"/>
<dbReference type="FunCoup" id="F4JZ24">
    <property type="interactions" value="306"/>
</dbReference>
<dbReference type="STRING" id="3702.F4JZ24"/>
<dbReference type="GlyCosmos" id="F4JZ24">
    <property type="glycosylation" value="1 site, No reported glycans"/>
</dbReference>
<dbReference type="GlyGen" id="F4JZ24">
    <property type="glycosylation" value="1 site"/>
</dbReference>
<dbReference type="iPTMnet" id="F4JZ24"/>
<dbReference type="PaxDb" id="3702-AT5G66060.1"/>
<dbReference type="ProteomicsDB" id="248881">
    <molecule id="F4JZ24-1"/>
</dbReference>
<dbReference type="EnsemblPlants" id="AT5G66060.1">
    <molecule id="F4JZ24-1"/>
    <property type="protein sequence ID" value="AT5G66060.1"/>
    <property type="gene ID" value="AT5G66060"/>
</dbReference>
<dbReference type="GeneID" id="836738"/>
<dbReference type="Gramene" id="AT5G66060.1">
    <molecule id="F4JZ24-1"/>
    <property type="protein sequence ID" value="AT5G66060.1"/>
    <property type="gene ID" value="AT5G66060"/>
</dbReference>
<dbReference type="KEGG" id="ath:AT5G66060"/>
<dbReference type="Araport" id="AT5G66060"/>
<dbReference type="TAIR" id="AT5G66060"/>
<dbReference type="eggNOG" id="KOG1591">
    <property type="taxonomic scope" value="Eukaryota"/>
</dbReference>
<dbReference type="HOGENOM" id="CLU_058132_1_2_1"/>
<dbReference type="InParanoid" id="F4JZ24"/>
<dbReference type="OMA" id="NIWTHER"/>
<dbReference type="PRO" id="PR:F4JZ24"/>
<dbReference type="Proteomes" id="UP000006548">
    <property type="component" value="Chromosome 5"/>
</dbReference>
<dbReference type="ExpressionAtlas" id="F4JZ24">
    <property type="expression patterns" value="baseline and differential"/>
</dbReference>
<dbReference type="GO" id="GO:0005789">
    <property type="term" value="C:endoplasmic reticulum membrane"/>
    <property type="evidence" value="ECO:0007669"/>
    <property type="project" value="UniProtKB-SubCell"/>
</dbReference>
<dbReference type="GO" id="GO:0000137">
    <property type="term" value="C:Golgi cis cisterna"/>
    <property type="evidence" value="ECO:0007005"/>
    <property type="project" value="TAIR"/>
</dbReference>
<dbReference type="GO" id="GO:0005506">
    <property type="term" value="F:iron ion binding"/>
    <property type="evidence" value="ECO:0007669"/>
    <property type="project" value="InterPro"/>
</dbReference>
<dbReference type="GO" id="GO:0031418">
    <property type="term" value="F:L-ascorbic acid binding"/>
    <property type="evidence" value="ECO:0007669"/>
    <property type="project" value="InterPro"/>
</dbReference>
<dbReference type="GO" id="GO:0004656">
    <property type="term" value="F:procollagen-proline 4-dioxygenase activity"/>
    <property type="evidence" value="ECO:0007669"/>
    <property type="project" value="UniProtKB-EC"/>
</dbReference>
<dbReference type="FunFam" id="2.60.120.620:FF:000002">
    <property type="entry name" value="Prolyl 4-hydroxylase 4"/>
    <property type="match status" value="1"/>
</dbReference>
<dbReference type="Gene3D" id="2.60.120.620">
    <property type="entry name" value="q2cbj1_9rhob like domain"/>
    <property type="match status" value="1"/>
</dbReference>
<dbReference type="InterPro" id="IPR005123">
    <property type="entry name" value="Oxoglu/Fe-dep_dioxygenase_dom"/>
</dbReference>
<dbReference type="InterPro" id="IPR045054">
    <property type="entry name" value="P4HA-like"/>
</dbReference>
<dbReference type="InterPro" id="IPR006620">
    <property type="entry name" value="Pro_4_hyd_alph"/>
</dbReference>
<dbReference type="InterPro" id="IPR044862">
    <property type="entry name" value="Pro_4_hyd_alph_FE2OG_OXY"/>
</dbReference>
<dbReference type="PANTHER" id="PTHR10869:SF123">
    <property type="entry name" value="PROLYL 4-HYDROXYLASE 10-RELATED"/>
    <property type="match status" value="1"/>
</dbReference>
<dbReference type="PANTHER" id="PTHR10869">
    <property type="entry name" value="PROLYL 4-HYDROXYLASE ALPHA SUBUNIT"/>
    <property type="match status" value="1"/>
</dbReference>
<dbReference type="Pfam" id="PF13640">
    <property type="entry name" value="2OG-FeII_Oxy_3"/>
    <property type="match status" value="1"/>
</dbReference>
<dbReference type="SMART" id="SM00702">
    <property type="entry name" value="P4Hc"/>
    <property type="match status" value="1"/>
</dbReference>
<dbReference type="PROSITE" id="PS51471">
    <property type="entry name" value="FE2OG_OXY"/>
    <property type="match status" value="1"/>
</dbReference>
<proteinExistence type="inferred from homology"/>
<gene>
    <name evidence="7" type="primary">P4H10</name>
    <name type="ordered locus">At5g66060</name>
    <name type="ORF">K2A18.14</name>
</gene>
<comment type="function">
    <text evidence="3">Catalyzes the post-translational formation of 4-hydroxyproline in -Xaa-Pro-Gly- sequences in proline-rich peptide sequences of plant glycoproteins and other proteins. Hydroxyprolines are important constituent of many plant cell wall glycoproteins such as extensins, hydroxyproline-rich glycoproteins, lectins and arabinogalactan proteins.</text>
</comment>
<comment type="catalytic activity">
    <reaction evidence="3">
        <text>L-prolyl-[collagen] + 2-oxoglutarate + O2 = trans-4-hydroxy-L-prolyl-[collagen] + succinate + CO2</text>
        <dbReference type="Rhea" id="RHEA:18945"/>
        <dbReference type="Rhea" id="RHEA-COMP:11676"/>
        <dbReference type="Rhea" id="RHEA-COMP:11680"/>
        <dbReference type="ChEBI" id="CHEBI:15379"/>
        <dbReference type="ChEBI" id="CHEBI:16526"/>
        <dbReference type="ChEBI" id="CHEBI:16810"/>
        <dbReference type="ChEBI" id="CHEBI:30031"/>
        <dbReference type="ChEBI" id="CHEBI:50342"/>
        <dbReference type="ChEBI" id="CHEBI:61965"/>
        <dbReference type="EC" id="1.14.11.2"/>
    </reaction>
</comment>
<comment type="cofactor">
    <cofactor evidence="6">
        <name>Fe(2+)</name>
        <dbReference type="ChEBI" id="CHEBI:29033"/>
    </cofactor>
    <text evidence="6">Binds 1 Fe(2+) ion per subunit.</text>
</comment>
<comment type="cofactor">
    <cofactor evidence="2">
        <name>L-ascorbate</name>
        <dbReference type="ChEBI" id="CHEBI:38290"/>
    </cofactor>
</comment>
<comment type="subcellular location">
    <subcellularLocation>
        <location evidence="1">Endoplasmic reticulum membrane</location>
        <topology evidence="1">Single-pass type II membrane protein</topology>
    </subcellularLocation>
</comment>
<comment type="alternative products">
    <event type="alternative splicing"/>
    <isoform>
        <id>F4JZ24-1</id>
        <name>1</name>
        <sequence type="displayed"/>
    </isoform>
    <text>A number of isoforms are produced. According to EST sequences.</text>
</comment>
<comment type="similarity">
    <text evidence="8">Belongs to the P4HA family.</text>
</comment>
<comment type="sequence caution" evidence="8">
    <conflict type="erroneous gene model prediction">
        <sequence resource="EMBL-CDS" id="BAB10411"/>
    </conflict>
</comment>
<sequence length="289" mass="32598">MMARPRNHRPSARKSSHSTLVFAVLIMSTFVILILLAFGILSVPSNNAGSSKANDLTSIVRKTLQRSGEDDSKNERWVEIISWEPRASVYHNFLTKEECKYLIELAKPHMEKSTVVDEKTGKSTDSRVRTSSGTFLARGRDKTIREIEKRISDFTFIPVEHGEGLQVLHYEIGQKYEPHYDYFMDEYNTRNGGQRIATVLMYLSDVEEGGETVFPAAKGNYSAVPWWNELSECGKGGLSVKPKMGDALLFWSMTPDATLDPSSLHGGCAVIKGNKWSSTKWLRVHEYKV</sequence>
<feature type="chain" id="PRO_0000429343" description="Probable prolyl 4-hydroxylase 10">
    <location>
        <begin position="1"/>
        <end position="289"/>
    </location>
</feature>
<feature type="transmembrane region" description="Helical; Signal-anchor for type II membrane protein" evidence="4">
    <location>
        <begin position="20"/>
        <end position="40"/>
    </location>
</feature>
<feature type="topological domain" description="Lumenal" evidence="8">
    <location>
        <begin position="41"/>
        <end position="289"/>
    </location>
</feature>
<feature type="domain" description="Fe2OG dioxygenase" evidence="6">
    <location>
        <begin position="161"/>
        <end position="284"/>
    </location>
</feature>
<feature type="binding site" evidence="6">
    <location>
        <position position="179"/>
    </location>
    <ligand>
        <name>Fe cation</name>
        <dbReference type="ChEBI" id="CHEBI:24875"/>
    </ligand>
</feature>
<feature type="binding site" evidence="6">
    <location>
        <position position="181"/>
    </location>
    <ligand>
        <name>Fe cation</name>
        <dbReference type="ChEBI" id="CHEBI:24875"/>
    </ligand>
</feature>
<feature type="binding site" evidence="6">
    <location>
        <position position="265"/>
    </location>
    <ligand>
        <name>Fe cation</name>
        <dbReference type="ChEBI" id="CHEBI:24875"/>
    </ligand>
</feature>
<feature type="binding site" evidence="6">
    <location>
        <position position="275"/>
    </location>
    <ligand>
        <name>2-oxoglutarate</name>
        <dbReference type="ChEBI" id="CHEBI:16810"/>
    </ligand>
</feature>
<feature type="glycosylation site" description="N-linked (GlcNAc...) asparagine" evidence="5">
    <location>
        <position position="220"/>
    </location>
</feature>